<reference key="1">
    <citation type="journal article" date="2000" name="Virology">
        <title>A novel lipothrixvirus, SIFV, of the extremely thermophilic crenarchaeon Sulfolobus.</title>
        <authorList>
            <person name="Arnold H.P."/>
            <person name="Zillig W."/>
            <person name="Ziese U."/>
            <person name="Holz I."/>
            <person name="Crosby M."/>
            <person name="Utterback T."/>
            <person name="Weidmann J.F."/>
            <person name="Umayam L.A."/>
            <person name="Teffera K."/>
            <person name="Kristjanson J.K."/>
            <person name="Klenk H.P."/>
            <person name="Nelson K.E."/>
            <person name="Fraser C.M."/>
        </authorList>
    </citation>
    <scope>NUCLEOTIDE SEQUENCE [GENOMIC DNA]</scope>
</reference>
<gene>
    <name type="primary">SIFV0008</name>
</gene>
<name>Y008_SIFVH</name>
<proteinExistence type="predicted"/>
<feature type="chain" id="PRO_0000385403" description="Uncharacterized protein 8">
    <location>
        <begin position="1"/>
        <end position="79"/>
    </location>
</feature>
<keyword id="KW-1185">Reference proteome</keyword>
<sequence length="79" mass="9084">MTKHELRMGKFSFSVGDYIEVLAQGRKYRLQIQEIDDYNNIIGTDPNGNPIYIKISKISVIRKMTQQEFTGGENVDTTK</sequence>
<accession>Q914M2</accession>
<organism>
    <name type="scientific">Sulfolobus islandicus filamentous virus (isolate Iceland/Hveragerdi)</name>
    <name type="common">SIFV</name>
    <dbReference type="NCBI Taxonomy" id="654908"/>
    <lineage>
        <taxon>Viruses</taxon>
        <taxon>Adnaviria</taxon>
        <taxon>Zilligvirae</taxon>
        <taxon>Taleaviricota</taxon>
        <taxon>Tokiviricetes</taxon>
        <taxon>Ligamenvirales</taxon>
        <taxon>Lipothrixviridae</taxon>
        <taxon>Betalipothrixvirus</taxon>
        <taxon>Sulfolobus islandicus filamentous virus</taxon>
    </lineage>
</organism>
<organismHost>
    <name type="scientific">Saccharolobus islandicus</name>
    <name type="common">Sulfolobus islandicus</name>
    <dbReference type="NCBI Taxonomy" id="43080"/>
</organismHost>
<protein>
    <recommendedName>
        <fullName>Uncharacterized protein 8</fullName>
    </recommendedName>
</protein>
<dbReference type="EMBL" id="AF440571">
    <property type="protein sequence ID" value="AAL27719.1"/>
    <property type="molecule type" value="Genomic_DNA"/>
</dbReference>
<dbReference type="RefSeq" id="NP_445673.1">
    <property type="nucleotide sequence ID" value="NC_003214.2"/>
</dbReference>
<dbReference type="GeneID" id="922346"/>
<dbReference type="KEGG" id="vg:922346"/>
<dbReference type="Proteomes" id="UP000007017">
    <property type="component" value="Segment"/>
</dbReference>